<feature type="chain" id="PRO_0000446594" description="Short-chain dehydrogenase PC-15">
    <location>
        <begin position="1"/>
        <end position="271"/>
    </location>
</feature>
<feature type="active site" description="Proton acceptor" evidence="3">
    <location>
        <position position="148"/>
    </location>
</feature>
<feature type="active site" description="Lowers pKa of active site Tyr" evidence="2">
    <location>
        <position position="152"/>
    </location>
</feature>
<feature type="binding site" evidence="1">
    <location>
        <position position="8"/>
    </location>
    <ligand>
        <name>NADP(+)</name>
        <dbReference type="ChEBI" id="CHEBI:58349"/>
    </ligand>
</feature>
<feature type="binding site" evidence="1">
    <location>
        <position position="34"/>
    </location>
    <ligand>
        <name>NADP(+)</name>
        <dbReference type="ChEBI" id="CHEBI:58349"/>
    </ligand>
</feature>
<feature type="binding site" evidence="1">
    <location>
        <position position="40"/>
    </location>
    <ligand>
        <name>NADP(+)</name>
        <dbReference type="ChEBI" id="CHEBI:58349"/>
    </ligand>
</feature>
<feature type="binding site" evidence="1">
    <location>
        <position position="56"/>
    </location>
    <ligand>
        <name>NADP(+)</name>
        <dbReference type="ChEBI" id="CHEBI:58349"/>
    </ligand>
</feature>
<feature type="binding site" evidence="2">
    <location>
        <position position="84"/>
    </location>
    <ligand>
        <name>NADP(+)</name>
        <dbReference type="ChEBI" id="CHEBI:58349"/>
    </ligand>
</feature>
<feature type="binding site" evidence="2">
    <location>
        <position position="148"/>
    </location>
    <ligand>
        <name>NADP(+)</name>
        <dbReference type="ChEBI" id="CHEBI:58349"/>
    </ligand>
</feature>
<feature type="binding site" evidence="2">
    <location>
        <position position="152"/>
    </location>
    <ligand>
        <name>NADP(+)</name>
        <dbReference type="ChEBI" id="CHEBI:58349"/>
    </ligand>
</feature>
<feature type="binding site" evidence="2">
    <location>
        <position position="181"/>
    </location>
    <ligand>
        <name>NADP(+)</name>
        <dbReference type="ChEBI" id="CHEBI:58349"/>
    </ligand>
</feature>
<feature type="binding site" evidence="1">
    <location>
        <position position="183"/>
    </location>
    <ligand>
        <name>NADP(+)</name>
        <dbReference type="ChEBI" id="CHEBI:58349"/>
    </ligand>
</feature>
<proteinExistence type="inferred from homology"/>
<reference key="1">
    <citation type="journal article" date="2015" name="Toxins">
        <title>Molecular cloning and functional analysis of gene clusters for the biosynthesis of indole-diterpenes in Penicillium crustosum and P. janthinellum.</title>
        <authorList>
            <person name="Nicholson M.J."/>
            <person name="Eaton C.J."/>
            <person name="Starkel C."/>
            <person name="Tapper B.A."/>
            <person name="Cox M.P."/>
            <person name="Scott B."/>
        </authorList>
    </citation>
    <scope>NUCLEOTIDE SEQUENCE [GENOMIC DNA]</scope>
    <scope>IDENTIFICATION</scope>
    <scope>FUNCTION</scope>
    <scope>PATHWAY</scope>
    <source>
        <strain>PN2402</strain>
    </source>
</reference>
<keyword id="KW-0521">NADP</keyword>
<keyword id="KW-0560">Oxidoreductase</keyword>
<organism>
    <name type="scientific">Penicillium crustosum</name>
    <name type="common">Blue mold fungus</name>
    <dbReference type="NCBI Taxonomy" id="36656"/>
    <lineage>
        <taxon>Eukaryota</taxon>
        <taxon>Fungi</taxon>
        <taxon>Dikarya</taxon>
        <taxon>Ascomycota</taxon>
        <taxon>Pezizomycotina</taxon>
        <taxon>Eurotiomycetes</taxon>
        <taxon>Eurotiomycetidae</taxon>
        <taxon>Eurotiales</taxon>
        <taxon>Aspergillaceae</taxon>
        <taxon>Penicillium</taxon>
    </lineage>
</organism>
<accession>A0A0E3D8L9</accession>
<sequence>MERRTVLITGCSQGGIGSALAEVFHQRGFHVFATARKTEKMKHLRDLDRMTLIPLDVTQESQISAAVELIQKHTGGTLDYLVNNAGDGYIIPVLDCDQLHGRQIFEVNFWGPLRMIQEFSPLLIAARGTIVNINSVASETLPLWLGIYSSSKAALLALSETLRLELKPFGVQVLSVMTGAVQTMIFQTNYRLPPDSAYMTWEKQIAAQAEGSEKASRMSATVYAERVVGDILNRQGGITYRGQMASFAYWVVALMPRFLRATPLLAQVGSQ</sequence>
<protein>
    <recommendedName>
        <fullName evidence="5">Short-chain dehydrogenase PC-15</fullName>
        <ecNumber evidence="7">1.1.1.-</ecNumber>
    </recommendedName>
    <alternativeName>
        <fullName evidence="5">Penitrem biosynthesis cluster protein PC-15</fullName>
    </alternativeName>
</protein>
<evidence type="ECO:0000250" key="1">
    <source>
        <dbReference type="UniProtKB" id="L0E2Z4"/>
    </source>
</evidence>
<evidence type="ECO:0000250" key="2">
    <source>
        <dbReference type="UniProtKB" id="O93868"/>
    </source>
</evidence>
<evidence type="ECO:0000255" key="3">
    <source>
        <dbReference type="PROSITE-ProRule" id="PRU10001"/>
    </source>
</evidence>
<evidence type="ECO:0000269" key="4">
    <source>
    </source>
</evidence>
<evidence type="ECO:0000303" key="5">
    <source>
    </source>
</evidence>
<evidence type="ECO:0000305" key="6"/>
<evidence type="ECO:0000305" key="7">
    <source>
    </source>
</evidence>
<comment type="function">
    <text evidence="4 7">Short-chain dehydrogenase; part of the gene cluster that mediates the biosynthesis of the indole diterpenes penitrems (PubMed:26213965). The geranylgeranyl diphosphate (GGPP) synthase penG catalyzes the first step in penitrem biosynthesis via conversion of farnesyl pyrophosphate and isopentyl pyrophosphate into geranylgeranyl pyrophosphate (GGPP) (Probable). Condensation of indole-3-glycerol phosphate with GGPP by the prenyl transferase penC then forms 3-geranylgeranylindole (3-GGI) (Probable). Epoxidation by the FAD-dependent monooxygenase penM leads to a epoxidized-GGI that is substrate of the terpene cyclase penB for cyclization to yield paspaline (Probable). Paspaline is subsequently converted to 13-desoxypaxilline by the cytochrome P450 monooxygenase penP, the latter being then converted to paxilline by the cytochrome P450 monooxygenase penQ (PubMed:26213965). Paxilline is converted to beta-paxitriol via C-10 ketoreduction by the short-chain dehydrogenase PC-15 which can be monoprenylated at the C-20 by the indole diterpene prenyltransferase penD (Probable). A two-step elimination (acetylation and elimination) process performed by the O-acetyltransferase PC-16 and the P.simplicissimum ptmI-ortholog not yet identified in P.crustosum, leads to the production of the prenylated form of penijanthine (Probable). The FAD-linked oxidoreductase ptmO then converts the prenylated form of penijanthine into PC-M5 which is in turn transformed into PC-M4 by the aromatic dimethylallyltransferase PC-22 (Probable). A series of oxidation steps involving 4 cytochrome P450 monooxygenases (PC-21, PC-05, PC-23, PC-20) and a FAD-dependent monooxygenase (PC-14) are required for the transformation of PC-M4 to penitrems A and E. Synthesis of these final products is proposed to proceed via penitrems D and C (PC-21, PC-05, PC-14) and penitrems B and F (PC-21, PC-05, PC-14, PC-23) (Probable).</text>
</comment>
<comment type="pathway">
    <text evidence="7">Secondary metabolite biosynthesis.</text>
</comment>
<comment type="similarity">
    <text evidence="6">Belongs to the short-chain dehydrogenases/reductases (SDR) family.</text>
</comment>
<name>PC15_PENCR</name>
<dbReference type="EC" id="1.1.1.-" evidence="7"/>
<dbReference type="EMBL" id="KC963408">
    <property type="protein sequence ID" value="AGZ20196.1"/>
    <property type="molecule type" value="Genomic_DNA"/>
</dbReference>
<dbReference type="SMR" id="A0A0E3D8L9"/>
<dbReference type="GO" id="GO:0005783">
    <property type="term" value="C:endoplasmic reticulum"/>
    <property type="evidence" value="ECO:0007669"/>
    <property type="project" value="TreeGrafter"/>
</dbReference>
<dbReference type="GO" id="GO:0005811">
    <property type="term" value="C:lipid droplet"/>
    <property type="evidence" value="ECO:0007669"/>
    <property type="project" value="TreeGrafter"/>
</dbReference>
<dbReference type="GO" id="GO:0000140">
    <property type="term" value="F:acylglycerone-phosphate reductase (NADP+) activity"/>
    <property type="evidence" value="ECO:0007669"/>
    <property type="project" value="TreeGrafter"/>
</dbReference>
<dbReference type="GO" id="GO:0004806">
    <property type="term" value="F:triacylglycerol lipase activity"/>
    <property type="evidence" value="ECO:0007669"/>
    <property type="project" value="TreeGrafter"/>
</dbReference>
<dbReference type="GO" id="GO:0006654">
    <property type="term" value="P:phosphatidic acid biosynthetic process"/>
    <property type="evidence" value="ECO:0007669"/>
    <property type="project" value="TreeGrafter"/>
</dbReference>
<dbReference type="GO" id="GO:0044550">
    <property type="term" value="P:secondary metabolite biosynthetic process"/>
    <property type="evidence" value="ECO:0007669"/>
    <property type="project" value="UniProtKB-ARBA"/>
</dbReference>
<dbReference type="GO" id="GO:0019433">
    <property type="term" value="P:triglyceride catabolic process"/>
    <property type="evidence" value="ECO:0007669"/>
    <property type="project" value="TreeGrafter"/>
</dbReference>
<dbReference type="CDD" id="cd05374">
    <property type="entry name" value="17beta-HSD-like_SDR_c"/>
    <property type="match status" value="1"/>
</dbReference>
<dbReference type="Gene3D" id="3.40.50.720">
    <property type="entry name" value="NAD(P)-binding Rossmann-like Domain"/>
    <property type="match status" value="1"/>
</dbReference>
<dbReference type="InterPro" id="IPR036291">
    <property type="entry name" value="NAD(P)-bd_dom_sf"/>
</dbReference>
<dbReference type="InterPro" id="IPR020904">
    <property type="entry name" value="Sc_DH/Rdtase_CS"/>
</dbReference>
<dbReference type="InterPro" id="IPR002347">
    <property type="entry name" value="SDR_fam"/>
</dbReference>
<dbReference type="PANTHER" id="PTHR44169">
    <property type="entry name" value="NADPH-DEPENDENT 1-ACYLDIHYDROXYACETONE PHOSPHATE REDUCTASE"/>
    <property type="match status" value="1"/>
</dbReference>
<dbReference type="PANTHER" id="PTHR44169:SF6">
    <property type="entry name" value="NADPH-DEPENDENT 1-ACYLDIHYDROXYACETONE PHOSPHATE REDUCTASE"/>
    <property type="match status" value="1"/>
</dbReference>
<dbReference type="Pfam" id="PF00106">
    <property type="entry name" value="adh_short"/>
    <property type="match status" value="1"/>
</dbReference>
<dbReference type="PRINTS" id="PR00081">
    <property type="entry name" value="GDHRDH"/>
</dbReference>
<dbReference type="PRINTS" id="PR00080">
    <property type="entry name" value="SDRFAMILY"/>
</dbReference>
<dbReference type="SUPFAM" id="SSF51735">
    <property type="entry name" value="NAD(P)-binding Rossmann-fold domains"/>
    <property type="match status" value="1"/>
</dbReference>
<dbReference type="PROSITE" id="PS00061">
    <property type="entry name" value="ADH_SHORT"/>
    <property type="match status" value="1"/>
</dbReference>
<gene>
    <name evidence="5" type="primary">PC-15</name>
</gene>